<feature type="chain" id="PRO_1000000821" description="Adenylosuccinate synthetase">
    <location>
        <begin position="1"/>
        <end position="427"/>
    </location>
</feature>
<feature type="active site" description="Proton acceptor" evidence="1">
    <location>
        <position position="13"/>
    </location>
</feature>
<feature type="active site" description="Proton donor" evidence="1">
    <location>
        <position position="41"/>
    </location>
</feature>
<feature type="binding site" evidence="1">
    <location>
        <begin position="12"/>
        <end position="18"/>
    </location>
    <ligand>
        <name>GTP</name>
        <dbReference type="ChEBI" id="CHEBI:37565"/>
    </ligand>
</feature>
<feature type="binding site" description="in other chain" evidence="1">
    <location>
        <begin position="13"/>
        <end position="16"/>
    </location>
    <ligand>
        <name>IMP</name>
        <dbReference type="ChEBI" id="CHEBI:58053"/>
        <note>ligand shared between dimeric partners</note>
    </ligand>
</feature>
<feature type="binding site" evidence="1">
    <location>
        <position position="13"/>
    </location>
    <ligand>
        <name>Mg(2+)</name>
        <dbReference type="ChEBI" id="CHEBI:18420"/>
    </ligand>
</feature>
<feature type="binding site" description="in other chain" evidence="1">
    <location>
        <begin position="38"/>
        <end position="41"/>
    </location>
    <ligand>
        <name>IMP</name>
        <dbReference type="ChEBI" id="CHEBI:58053"/>
        <note>ligand shared between dimeric partners</note>
    </ligand>
</feature>
<feature type="binding site" evidence="1">
    <location>
        <begin position="40"/>
        <end position="42"/>
    </location>
    <ligand>
        <name>GTP</name>
        <dbReference type="ChEBI" id="CHEBI:37565"/>
    </ligand>
</feature>
<feature type="binding site" evidence="1">
    <location>
        <position position="40"/>
    </location>
    <ligand>
        <name>Mg(2+)</name>
        <dbReference type="ChEBI" id="CHEBI:18420"/>
    </ligand>
</feature>
<feature type="binding site" description="in other chain" evidence="1">
    <location>
        <position position="128"/>
    </location>
    <ligand>
        <name>IMP</name>
        <dbReference type="ChEBI" id="CHEBI:58053"/>
        <note>ligand shared between dimeric partners</note>
    </ligand>
</feature>
<feature type="binding site" evidence="1">
    <location>
        <position position="142"/>
    </location>
    <ligand>
        <name>IMP</name>
        <dbReference type="ChEBI" id="CHEBI:58053"/>
        <note>ligand shared between dimeric partners</note>
    </ligand>
</feature>
<feature type="binding site" description="in other chain" evidence="1">
    <location>
        <position position="223"/>
    </location>
    <ligand>
        <name>IMP</name>
        <dbReference type="ChEBI" id="CHEBI:58053"/>
        <note>ligand shared between dimeric partners</note>
    </ligand>
</feature>
<feature type="binding site" description="in other chain" evidence="1">
    <location>
        <position position="238"/>
    </location>
    <ligand>
        <name>IMP</name>
        <dbReference type="ChEBI" id="CHEBI:58053"/>
        <note>ligand shared between dimeric partners</note>
    </ligand>
</feature>
<feature type="binding site" evidence="1">
    <location>
        <begin position="298"/>
        <end position="304"/>
    </location>
    <ligand>
        <name>substrate</name>
    </ligand>
</feature>
<feature type="binding site" description="in other chain" evidence="1">
    <location>
        <position position="302"/>
    </location>
    <ligand>
        <name>IMP</name>
        <dbReference type="ChEBI" id="CHEBI:58053"/>
        <note>ligand shared between dimeric partners</note>
    </ligand>
</feature>
<feature type="binding site" evidence="1">
    <location>
        <position position="304"/>
    </location>
    <ligand>
        <name>GTP</name>
        <dbReference type="ChEBI" id="CHEBI:37565"/>
    </ligand>
</feature>
<feature type="binding site" evidence="1">
    <location>
        <begin position="330"/>
        <end position="332"/>
    </location>
    <ligand>
        <name>GTP</name>
        <dbReference type="ChEBI" id="CHEBI:37565"/>
    </ligand>
</feature>
<feature type="binding site" evidence="1">
    <location>
        <begin position="412"/>
        <end position="414"/>
    </location>
    <ligand>
        <name>GTP</name>
        <dbReference type="ChEBI" id="CHEBI:37565"/>
    </ligand>
</feature>
<evidence type="ECO:0000255" key="1">
    <source>
        <dbReference type="HAMAP-Rule" id="MF_00011"/>
    </source>
</evidence>
<gene>
    <name evidence="1" type="primary">purA</name>
    <name type="ordered locus">Francci3_4368</name>
</gene>
<comment type="function">
    <text evidence="1">Plays an important role in the de novo pathway of purine nucleotide biosynthesis. Catalyzes the first committed step in the biosynthesis of AMP from IMP.</text>
</comment>
<comment type="catalytic activity">
    <reaction evidence="1">
        <text>IMP + L-aspartate + GTP = N(6)-(1,2-dicarboxyethyl)-AMP + GDP + phosphate + 2 H(+)</text>
        <dbReference type="Rhea" id="RHEA:15753"/>
        <dbReference type="ChEBI" id="CHEBI:15378"/>
        <dbReference type="ChEBI" id="CHEBI:29991"/>
        <dbReference type="ChEBI" id="CHEBI:37565"/>
        <dbReference type="ChEBI" id="CHEBI:43474"/>
        <dbReference type="ChEBI" id="CHEBI:57567"/>
        <dbReference type="ChEBI" id="CHEBI:58053"/>
        <dbReference type="ChEBI" id="CHEBI:58189"/>
        <dbReference type="EC" id="6.3.4.4"/>
    </reaction>
</comment>
<comment type="cofactor">
    <cofactor evidence="1">
        <name>Mg(2+)</name>
        <dbReference type="ChEBI" id="CHEBI:18420"/>
    </cofactor>
    <text evidence="1">Binds 1 Mg(2+) ion per subunit.</text>
</comment>
<comment type="pathway">
    <text evidence="1">Purine metabolism; AMP biosynthesis via de novo pathway; AMP from IMP: step 1/2.</text>
</comment>
<comment type="subunit">
    <text evidence="1">Homodimer.</text>
</comment>
<comment type="subcellular location">
    <subcellularLocation>
        <location evidence="1">Cytoplasm</location>
    </subcellularLocation>
</comment>
<comment type="similarity">
    <text evidence="1">Belongs to the adenylosuccinate synthetase family.</text>
</comment>
<sequence>MPALVLIGAQWGDEGKGKATDLLGGAVDYVVRYQGGNNAGHTVVIGAESYALHLIPSGMLRADCVPVIGNGVVIDPGVLLAEMDGLTARGIDVSRLLISANAHLIMPHHRALDRVIERYLGKARIGTTGRGIGPTYGDKVARTGIRVQDLLDPGIFHKKLELVLREKNQVLAKVYNRRRIELDEVVEEYADYAKRLQPHIADTGLILDRALRAGKVVLLEGSQGTLLDVDHGTYPFVTSSNPTAGYAATGAGIGPTRISRVIGIIKAYTTRVGAGPFPTELDDKVGEELRRIGGEFGVTTGRARRTGWFDAVIARYAVRVNGLTDLFLTKLDVLSGFDRVPICVGYDLGGERVDEMPMTQTEFHHAKPIYTDLPGWHEDISDVRSFADLPGAAKDYIRALEEFSGAPVSAVGVGPGRDQTLVINDLV</sequence>
<protein>
    <recommendedName>
        <fullName evidence="1">Adenylosuccinate synthetase</fullName>
        <shortName evidence="1">AMPSase</shortName>
        <shortName evidence="1">AdSS</shortName>
        <ecNumber evidence="1">6.3.4.4</ecNumber>
    </recommendedName>
    <alternativeName>
        <fullName evidence="1">IMP--aspartate ligase</fullName>
    </alternativeName>
</protein>
<proteinExistence type="inferred from homology"/>
<name>PURA_FRACC</name>
<accession>Q2J4S8</accession>
<reference key="1">
    <citation type="journal article" date="2007" name="Genome Res.">
        <title>Genome characteristics of facultatively symbiotic Frankia sp. strains reflect host range and host plant biogeography.</title>
        <authorList>
            <person name="Normand P."/>
            <person name="Lapierre P."/>
            <person name="Tisa L.S."/>
            <person name="Gogarten J.P."/>
            <person name="Alloisio N."/>
            <person name="Bagnarol E."/>
            <person name="Bassi C.A."/>
            <person name="Berry A.M."/>
            <person name="Bickhart D.M."/>
            <person name="Choisne N."/>
            <person name="Couloux A."/>
            <person name="Cournoyer B."/>
            <person name="Cruveiller S."/>
            <person name="Daubin V."/>
            <person name="Demange N."/>
            <person name="Francino M.P."/>
            <person name="Goltsman E."/>
            <person name="Huang Y."/>
            <person name="Kopp O.R."/>
            <person name="Labarre L."/>
            <person name="Lapidus A."/>
            <person name="Lavire C."/>
            <person name="Marechal J."/>
            <person name="Martinez M."/>
            <person name="Mastronunzio J.E."/>
            <person name="Mullin B.C."/>
            <person name="Niemann J."/>
            <person name="Pujic P."/>
            <person name="Rawnsley T."/>
            <person name="Rouy Z."/>
            <person name="Schenowitz C."/>
            <person name="Sellstedt A."/>
            <person name="Tavares F."/>
            <person name="Tomkins J.P."/>
            <person name="Vallenet D."/>
            <person name="Valverde C."/>
            <person name="Wall L.G."/>
            <person name="Wang Y."/>
            <person name="Medigue C."/>
            <person name="Benson D.R."/>
        </authorList>
    </citation>
    <scope>NUCLEOTIDE SEQUENCE [LARGE SCALE GENOMIC DNA]</scope>
    <source>
        <strain>DSM 45818 / CECT 9043 / HFP020203 / CcI3</strain>
    </source>
</reference>
<keyword id="KW-0963">Cytoplasm</keyword>
<keyword id="KW-0342">GTP-binding</keyword>
<keyword id="KW-0436">Ligase</keyword>
<keyword id="KW-0460">Magnesium</keyword>
<keyword id="KW-0479">Metal-binding</keyword>
<keyword id="KW-0547">Nucleotide-binding</keyword>
<keyword id="KW-0658">Purine biosynthesis</keyword>
<keyword id="KW-1185">Reference proteome</keyword>
<dbReference type="EC" id="6.3.4.4" evidence="1"/>
<dbReference type="EMBL" id="CP000249">
    <property type="protein sequence ID" value="ABD13714.1"/>
    <property type="molecule type" value="Genomic_DNA"/>
</dbReference>
<dbReference type="RefSeq" id="WP_011438722.1">
    <property type="nucleotide sequence ID" value="NZ_JENI01000009.1"/>
</dbReference>
<dbReference type="SMR" id="Q2J4S8"/>
<dbReference type="STRING" id="106370.Francci3_4368"/>
<dbReference type="KEGG" id="fra:Francci3_4368"/>
<dbReference type="eggNOG" id="COG0104">
    <property type="taxonomic scope" value="Bacteria"/>
</dbReference>
<dbReference type="HOGENOM" id="CLU_029848_0_0_11"/>
<dbReference type="OrthoDB" id="9807553at2"/>
<dbReference type="PhylomeDB" id="Q2J4S8"/>
<dbReference type="UniPathway" id="UPA00075">
    <property type="reaction ID" value="UER00335"/>
</dbReference>
<dbReference type="Proteomes" id="UP000001937">
    <property type="component" value="Chromosome"/>
</dbReference>
<dbReference type="GO" id="GO:0005737">
    <property type="term" value="C:cytoplasm"/>
    <property type="evidence" value="ECO:0007669"/>
    <property type="project" value="UniProtKB-SubCell"/>
</dbReference>
<dbReference type="GO" id="GO:0004019">
    <property type="term" value="F:adenylosuccinate synthase activity"/>
    <property type="evidence" value="ECO:0007669"/>
    <property type="project" value="UniProtKB-UniRule"/>
</dbReference>
<dbReference type="GO" id="GO:0005525">
    <property type="term" value="F:GTP binding"/>
    <property type="evidence" value="ECO:0007669"/>
    <property type="project" value="UniProtKB-UniRule"/>
</dbReference>
<dbReference type="GO" id="GO:0000287">
    <property type="term" value="F:magnesium ion binding"/>
    <property type="evidence" value="ECO:0007669"/>
    <property type="project" value="UniProtKB-UniRule"/>
</dbReference>
<dbReference type="GO" id="GO:0044208">
    <property type="term" value="P:'de novo' AMP biosynthetic process"/>
    <property type="evidence" value="ECO:0007669"/>
    <property type="project" value="UniProtKB-UniRule"/>
</dbReference>
<dbReference type="GO" id="GO:0046040">
    <property type="term" value="P:IMP metabolic process"/>
    <property type="evidence" value="ECO:0007669"/>
    <property type="project" value="TreeGrafter"/>
</dbReference>
<dbReference type="CDD" id="cd03108">
    <property type="entry name" value="AdSS"/>
    <property type="match status" value="1"/>
</dbReference>
<dbReference type="FunFam" id="1.10.300.10:FF:000001">
    <property type="entry name" value="Adenylosuccinate synthetase"/>
    <property type="match status" value="1"/>
</dbReference>
<dbReference type="FunFam" id="3.90.170.10:FF:000001">
    <property type="entry name" value="Adenylosuccinate synthetase"/>
    <property type="match status" value="1"/>
</dbReference>
<dbReference type="Gene3D" id="3.40.440.10">
    <property type="entry name" value="Adenylosuccinate Synthetase, subunit A, domain 1"/>
    <property type="match status" value="1"/>
</dbReference>
<dbReference type="Gene3D" id="1.10.300.10">
    <property type="entry name" value="Adenylosuccinate Synthetase, subunit A, domain 2"/>
    <property type="match status" value="1"/>
</dbReference>
<dbReference type="Gene3D" id="3.90.170.10">
    <property type="entry name" value="Adenylosuccinate Synthetase, subunit A, domain 3"/>
    <property type="match status" value="1"/>
</dbReference>
<dbReference type="HAMAP" id="MF_00011">
    <property type="entry name" value="Adenylosucc_synth"/>
    <property type="match status" value="1"/>
</dbReference>
<dbReference type="InterPro" id="IPR018220">
    <property type="entry name" value="Adenylosuccin_syn_GTP-bd"/>
</dbReference>
<dbReference type="InterPro" id="IPR033128">
    <property type="entry name" value="Adenylosuccin_syn_Lys_AS"/>
</dbReference>
<dbReference type="InterPro" id="IPR042109">
    <property type="entry name" value="Adenylosuccinate_synth_dom1"/>
</dbReference>
<dbReference type="InterPro" id="IPR042110">
    <property type="entry name" value="Adenylosuccinate_synth_dom2"/>
</dbReference>
<dbReference type="InterPro" id="IPR042111">
    <property type="entry name" value="Adenylosuccinate_synth_dom3"/>
</dbReference>
<dbReference type="InterPro" id="IPR001114">
    <property type="entry name" value="Adenylosuccinate_synthetase"/>
</dbReference>
<dbReference type="InterPro" id="IPR027417">
    <property type="entry name" value="P-loop_NTPase"/>
</dbReference>
<dbReference type="NCBIfam" id="NF002223">
    <property type="entry name" value="PRK01117.1"/>
    <property type="match status" value="1"/>
</dbReference>
<dbReference type="NCBIfam" id="TIGR00184">
    <property type="entry name" value="purA"/>
    <property type="match status" value="1"/>
</dbReference>
<dbReference type="PANTHER" id="PTHR11846">
    <property type="entry name" value="ADENYLOSUCCINATE SYNTHETASE"/>
    <property type="match status" value="1"/>
</dbReference>
<dbReference type="PANTHER" id="PTHR11846:SF0">
    <property type="entry name" value="ADENYLOSUCCINATE SYNTHETASE"/>
    <property type="match status" value="1"/>
</dbReference>
<dbReference type="Pfam" id="PF00709">
    <property type="entry name" value="Adenylsucc_synt"/>
    <property type="match status" value="1"/>
</dbReference>
<dbReference type="SMART" id="SM00788">
    <property type="entry name" value="Adenylsucc_synt"/>
    <property type="match status" value="1"/>
</dbReference>
<dbReference type="SUPFAM" id="SSF52540">
    <property type="entry name" value="P-loop containing nucleoside triphosphate hydrolases"/>
    <property type="match status" value="1"/>
</dbReference>
<dbReference type="PROSITE" id="PS01266">
    <property type="entry name" value="ADENYLOSUCCIN_SYN_1"/>
    <property type="match status" value="1"/>
</dbReference>
<dbReference type="PROSITE" id="PS00513">
    <property type="entry name" value="ADENYLOSUCCIN_SYN_2"/>
    <property type="match status" value="1"/>
</dbReference>
<organism>
    <name type="scientific">Frankia casuarinae (strain DSM 45818 / CECT 9043 / HFP020203 / CcI3)</name>
    <dbReference type="NCBI Taxonomy" id="106370"/>
    <lineage>
        <taxon>Bacteria</taxon>
        <taxon>Bacillati</taxon>
        <taxon>Actinomycetota</taxon>
        <taxon>Actinomycetes</taxon>
        <taxon>Frankiales</taxon>
        <taxon>Frankiaceae</taxon>
        <taxon>Frankia</taxon>
    </lineage>
</organism>